<proteinExistence type="inferred from homology"/>
<dbReference type="EC" id="1.10.3.9" evidence="1"/>
<dbReference type="EMBL" id="X04617">
    <property type="protein sequence ID" value="CAA28292.1"/>
    <property type="molecule type" value="Genomic_DNA"/>
</dbReference>
<dbReference type="EMBL" id="X04618">
    <property type="protein sequence ID" value="CAA28293.1"/>
    <property type="molecule type" value="Genomic_DNA"/>
</dbReference>
<dbReference type="EMBL" id="CP000100">
    <property type="protein sequence ID" value="ABB57419.1"/>
    <property type="molecule type" value="Genomic_DNA"/>
</dbReference>
<dbReference type="EMBL" id="CP000100">
    <property type="protein sequence ID" value="ABB56923.1"/>
    <property type="molecule type" value="Genomic_DNA"/>
</dbReference>
<dbReference type="EMBL" id="M34833">
    <property type="protein sequence ID" value="AAA27361.1"/>
    <property type="molecule type" value="Genomic_DNA"/>
</dbReference>
<dbReference type="SMR" id="P04997"/>
<dbReference type="STRING" id="1140.Synpcc7942_0893"/>
<dbReference type="TCDB" id="3.E.2.2.1">
    <property type="family name" value="the photosynthetic reaction center (prc) family"/>
</dbReference>
<dbReference type="PaxDb" id="1140-Synpcc7942_0893"/>
<dbReference type="KEGG" id="syf:Synpcc7942_0893"/>
<dbReference type="KEGG" id="syf:Synpcc7942_1389"/>
<dbReference type="eggNOG" id="ENOG502Z87P">
    <property type="taxonomic scope" value="Bacteria"/>
</dbReference>
<dbReference type="HOGENOM" id="CLU_054206_1_0_3"/>
<dbReference type="OrthoDB" id="505356at2"/>
<dbReference type="BioCyc" id="MetaCyc:SYNPCC7942_0893-MONOMER"/>
<dbReference type="BioCyc" id="MetaCyc:SYNPCC7942_1389-MONOMER"/>
<dbReference type="BioCyc" id="SYNEL:SYNPCC7942_0893-MONOMER"/>
<dbReference type="BioCyc" id="SYNEL:SYNPCC7942_1389-MONOMER"/>
<dbReference type="Proteomes" id="UP000889800">
    <property type="component" value="Chromosome"/>
</dbReference>
<dbReference type="GO" id="GO:0009523">
    <property type="term" value="C:photosystem II"/>
    <property type="evidence" value="ECO:0007669"/>
    <property type="project" value="UniProtKB-KW"/>
</dbReference>
<dbReference type="GO" id="GO:0031676">
    <property type="term" value="C:plasma membrane-derived thylakoid membrane"/>
    <property type="evidence" value="ECO:0007669"/>
    <property type="project" value="UniProtKB-SubCell"/>
</dbReference>
<dbReference type="GO" id="GO:0016168">
    <property type="term" value="F:chlorophyll binding"/>
    <property type="evidence" value="ECO:0007669"/>
    <property type="project" value="UniProtKB-UniRule"/>
</dbReference>
<dbReference type="GO" id="GO:0045156">
    <property type="term" value="F:electron transporter, transferring electrons within the cyclic electron transport pathway of photosynthesis activity"/>
    <property type="evidence" value="ECO:0007669"/>
    <property type="project" value="InterPro"/>
</dbReference>
<dbReference type="GO" id="GO:0005506">
    <property type="term" value="F:iron ion binding"/>
    <property type="evidence" value="ECO:0007669"/>
    <property type="project" value="UniProtKB-UniRule"/>
</dbReference>
<dbReference type="GO" id="GO:0016682">
    <property type="term" value="F:oxidoreductase activity, acting on diphenols and related substances as donors, oxygen as acceptor"/>
    <property type="evidence" value="ECO:0007669"/>
    <property type="project" value="UniProtKB-UniRule"/>
</dbReference>
<dbReference type="GO" id="GO:0010242">
    <property type="term" value="F:oxygen evolving activity"/>
    <property type="evidence" value="ECO:0007669"/>
    <property type="project" value="UniProtKB-EC"/>
</dbReference>
<dbReference type="GO" id="GO:0009772">
    <property type="term" value="P:photosynthetic electron transport in photosystem II"/>
    <property type="evidence" value="ECO:0007669"/>
    <property type="project" value="InterPro"/>
</dbReference>
<dbReference type="GO" id="GO:0009635">
    <property type="term" value="P:response to herbicide"/>
    <property type="evidence" value="ECO:0007669"/>
    <property type="project" value="UniProtKB-KW"/>
</dbReference>
<dbReference type="CDD" id="cd09289">
    <property type="entry name" value="Photosystem-II_D1"/>
    <property type="match status" value="1"/>
</dbReference>
<dbReference type="FunFam" id="1.20.85.10:FF:000002">
    <property type="entry name" value="Photosystem II protein D1"/>
    <property type="match status" value="1"/>
</dbReference>
<dbReference type="Gene3D" id="1.20.85.10">
    <property type="entry name" value="Photosystem II protein D1-like"/>
    <property type="match status" value="1"/>
</dbReference>
<dbReference type="HAMAP" id="MF_01379">
    <property type="entry name" value="PSII_PsbA_D1"/>
    <property type="match status" value="1"/>
</dbReference>
<dbReference type="InterPro" id="IPR055266">
    <property type="entry name" value="D1/D2"/>
</dbReference>
<dbReference type="InterPro" id="IPR036854">
    <property type="entry name" value="Photo_II_D1/D2_sf"/>
</dbReference>
<dbReference type="InterPro" id="IPR000484">
    <property type="entry name" value="Photo_RC_L/M"/>
</dbReference>
<dbReference type="InterPro" id="IPR055265">
    <property type="entry name" value="Photo_RC_L/M_CS"/>
</dbReference>
<dbReference type="InterPro" id="IPR005867">
    <property type="entry name" value="PSII_D1"/>
</dbReference>
<dbReference type="NCBIfam" id="TIGR01151">
    <property type="entry name" value="psbA"/>
    <property type="match status" value="1"/>
</dbReference>
<dbReference type="PANTHER" id="PTHR33149:SF12">
    <property type="entry name" value="PHOTOSYSTEM II D2 PROTEIN"/>
    <property type="match status" value="1"/>
</dbReference>
<dbReference type="PANTHER" id="PTHR33149">
    <property type="entry name" value="PHOTOSYSTEM II PROTEIN D1"/>
    <property type="match status" value="1"/>
</dbReference>
<dbReference type="Pfam" id="PF00124">
    <property type="entry name" value="Photo_RC"/>
    <property type="match status" value="1"/>
</dbReference>
<dbReference type="PRINTS" id="PR00256">
    <property type="entry name" value="REACTNCENTRE"/>
</dbReference>
<dbReference type="SUPFAM" id="SSF81483">
    <property type="entry name" value="Bacterial photosystem II reaction centre, L and M subunits"/>
    <property type="match status" value="1"/>
</dbReference>
<dbReference type="PROSITE" id="PS00244">
    <property type="entry name" value="REACTION_CENTER"/>
    <property type="match status" value="1"/>
</dbReference>
<keyword id="KW-0106">Calcium</keyword>
<keyword id="KW-0148">Chlorophyll</keyword>
<keyword id="KW-0157">Chromophore</keyword>
<keyword id="KW-0249">Electron transport</keyword>
<keyword id="KW-0359">Herbicide resistance</keyword>
<keyword id="KW-0408">Iron</keyword>
<keyword id="KW-0460">Magnesium</keyword>
<keyword id="KW-0464">Manganese</keyword>
<keyword id="KW-0472">Membrane</keyword>
<keyword id="KW-0479">Metal-binding</keyword>
<keyword id="KW-0560">Oxidoreductase</keyword>
<keyword id="KW-0602">Photosynthesis</keyword>
<keyword id="KW-0604">Photosystem II</keyword>
<keyword id="KW-1185">Reference proteome</keyword>
<keyword id="KW-0793">Thylakoid</keyword>
<keyword id="KW-0812">Transmembrane</keyword>
<keyword id="KW-1133">Transmembrane helix</keyword>
<keyword id="KW-0813">Transport</keyword>
<protein>
    <recommendedName>
        <fullName evidence="1">Photosystem II protein D1 2</fullName>
        <shortName evidence="1">PSII D1 protein 2</shortName>
        <ecNumber evidence="1">1.10.3.9</ecNumber>
    </recommendedName>
    <alternativeName>
        <fullName evidence="1">Photosystem II Q(B) protein 2</fullName>
    </alternativeName>
</protein>
<reference key="1">
    <citation type="journal article" date="1986" name="EMBO J.">
        <title>Expression of a family of psbA genes encoding a photosystem II polypeptide in the cyanobacterium Anacystis nidulans R2.</title>
        <authorList>
            <person name="Golden S.S."/>
            <person name="Brusslan J."/>
            <person name="Haselkorn R."/>
        </authorList>
    </citation>
    <scope>NUCLEOTIDE SEQUENCE [GENOMIC DNA]</scope>
</reference>
<reference key="2">
    <citation type="submission" date="2005-08" db="EMBL/GenBank/DDBJ databases">
        <title>Complete sequence of chromosome 1 of Synechococcus elongatus PCC 7942.</title>
        <authorList>
            <consortium name="US DOE Joint Genome Institute"/>
            <person name="Copeland A."/>
            <person name="Lucas S."/>
            <person name="Lapidus A."/>
            <person name="Barry K."/>
            <person name="Detter J.C."/>
            <person name="Glavina T."/>
            <person name="Hammon N."/>
            <person name="Israni S."/>
            <person name="Pitluck S."/>
            <person name="Schmutz J."/>
            <person name="Larimer F."/>
            <person name="Land M."/>
            <person name="Kyrpides N."/>
            <person name="Lykidis A."/>
            <person name="Golden S."/>
            <person name="Richardson P."/>
        </authorList>
    </citation>
    <scope>NUCLEOTIDE SEQUENCE [LARGE SCALE GENOMIC DNA]</scope>
    <source>
        <strain>ATCC 33912 / PCC 7942 / FACHB-805</strain>
    </source>
</reference>
<reference key="3">
    <citation type="journal article" date="1990" name="J. Bacteriol.">
        <title>Different and rapid responses of four cyanobacterial psbA transcripts to changes in light intensity.</title>
        <authorList>
            <person name="Bustos S.A."/>
            <person name="Schaefer M.R."/>
            <person name="Golden S.S."/>
        </authorList>
    </citation>
    <scope>NUCLEOTIDE SEQUENCE [GENOMIC DNA] OF 1-10</scope>
</reference>
<feature type="chain" id="PRO_0000090490" description="Photosystem II protein D1 2" evidence="1">
    <location>
        <begin position="1"/>
        <end position="344"/>
    </location>
</feature>
<feature type="propeptide" id="PRO_0000316411" evidence="1">
    <location>
        <begin position="345"/>
        <end position="360"/>
    </location>
</feature>
<feature type="transmembrane region" description="Helical" evidence="1">
    <location>
        <begin position="29"/>
        <end position="46"/>
    </location>
</feature>
<feature type="transmembrane region" description="Helical" evidence="1">
    <location>
        <begin position="118"/>
        <end position="133"/>
    </location>
</feature>
<feature type="transmembrane region" description="Helical" evidence="1">
    <location>
        <begin position="142"/>
        <end position="156"/>
    </location>
</feature>
<feature type="transmembrane region" description="Helical" evidence="1">
    <location>
        <begin position="197"/>
        <end position="218"/>
    </location>
</feature>
<feature type="transmembrane region" description="Helical" evidence="1">
    <location>
        <begin position="274"/>
        <end position="288"/>
    </location>
</feature>
<feature type="binding site" description="axial binding residue" evidence="1">
    <location>
        <position position="118"/>
    </location>
    <ligand>
        <name>chlorophyll a</name>
        <dbReference type="ChEBI" id="CHEBI:58416"/>
        <label>ChlzD1</label>
    </ligand>
    <ligandPart>
        <name>Mg</name>
        <dbReference type="ChEBI" id="CHEBI:25107"/>
    </ligandPart>
</feature>
<feature type="binding site" evidence="1">
    <location>
        <position position="126"/>
    </location>
    <ligand>
        <name>pheophytin a</name>
        <dbReference type="ChEBI" id="CHEBI:136840"/>
        <label>D1</label>
    </ligand>
</feature>
<feature type="binding site" evidence="1">
    <location>
        <position position="170"/>
    </location>
    <ligand>
        <name>[CaMn4O5] cluster</name>
        <dbReference type="ChEBI" id="CHEBI:189552"/>
    </ligand>
</feature>
<feature type="binding site" evidence="1">
    <location>
        <position position="189"/>
    </location>
    <ligand>
        <name>[CaMn4O5] cluster</name>
        <dbReference type="ChEBI" id="CHEBI:189552"/>
    </ligand>
</feature>
<feature type="binding site" description="axial binding residue" evidence="1">
    <location>
        <position position="198"/>
    </location>
    <ligand>
        <name>chlorophyll a</name>
        <dbReference type="ChEBI" id="CHEBI:58416"/>
        <label>PD1</label>
    </ligand>
    <ligandPart>
        <name>Mg</name>
        <dbReference type="ChEBI" id="CHEBI:25107"/>
    </ligandPart>
</feature>
<feature type="binding site" evidence="1">
    <location>
        <position position="215"/>
    </location>
    <ligand>
        <name>a quinone</name>
        <dbReference type="ChEBI" id="CHEBI:132124"/>
        <label>B</label>
    </ligand>
</feature>
<feature type="binding site" evidence="1">
    <location>
        <position position="215"/>
    </location>
    <ligand>
        <name>Fe cation</name>
        <dbReference type="ChEBI" id="CHEBI:24875"/>
        <note>ligand shared with heterodimeric partner</note>
    </ligand>
</feature>
<feature type="binding site" evidence="1">
    <location>
        <begin position="264"/>
        <end position="265"/>
    </location>
    <ligand>
        <name>a quinone</name>
        <dbReference type="ChEBI" id="CHEBI:132124"/>
        <label>B</label>
    </ligand>
</feature>
<feature type="binding site" evidence="1">
    <location>
        <position position="272"/>
    </location>
    <ligand>
        <name>Fe cation</name>
        <dbReference type="ChEBI" id="CHEBI:24875"/>
        <note>ligand shared with heterodimeric partner</note>
    </ligand>
</feature>
<feature type="binding site" evidence="1">
    <location>
        <position position="332"/>
    </location>
    <ligand>
        <name>[CaMn4O5] cluster</name>
        <dbReference type="ChEBI" id="CHEBI:189552"/>
    </ligand>
</feature>
<feature type="binding site" evidence="1">
    <location>
        <position position="333"/>
    </location>
    <ligand>
        <name>[CaMn4O5] cluster</name>
        <dbReference type="ChEBI" id="CHEBI:189552"/>
    </ligand>
</feature>
<feature type="binding site" evidence="1">
    <location>
        <position position="342"/>
    </location>
    <ligand>
        <name>[CaMn4O5] cluster</name>
        <dbReference type="ChEBI" id="CHEBI:189552"/>
    </ligand>
</feature>
<feature type="binding site" evidence="1">
    <location>
        <position position="344"/>
    </location>
    <ligand>
        <name>[CaMn4O5] cluster</name>
        <dbReference type="ChEBI" id="CHEBI:189552"/>
    </ligand>
</feature>
<feature type="site" description="Tyrosine radical intermediate" evidence="1">
    <location>
        <position position="161"/>
    </location>
</feature>
<feature type="site" description="Stabilizes free radical intermediate" evidence="1">
    <location>
        <position position="190"/>
    </location>
</feature>
<feature type="site" description="Cleavage; by CtpA" evidence="1">
    <location>
        <begin position="344"/>
        <end position="345"/>
    </location>
</feature>
<sequence>MTTALQRRESASLWQQFCEWVTSTDNRLYVGWFGVLMIPTLLTATICFIVAFIAAPPVDIDGIREPVAGSLMYGNNIISGAVVPSSNAIGLHFYPIWEAASLDEWLYNGGPYQLVVFHFLIGVFCYMGREWELSYRLGMRPWICVAYSAPVAAATAVFLIYPIGQGSFSDGMPLGISGTFNFMFVFQAEHNILMHPFHMLGVAGVFGGSLFSAMHGSLVTSSLVRETTETESQNYGYKFGQEEETYNIVAAHGYFGRLIFQYASFNNSRSLHFFLAAWPVVGIWFTSLGISTMAFNLNGFNFNQSVLDSQGRVINTWADVLNRANLGMEVMHERNAHNFPLDLAAGEATPVALTAPAING</sequence>
<evidence type="ECO:0000255" key="1">
    <source>
        <dbReference type="HAMAP-Rule" id="MF_01379"/>
    </source>
</evidence>
<evidence type="ECO:0000305" key="2"/>
<organism>
    <name type="scientific">Synechococcus elongatus (strain ATCC 33912 / PCC 7942 / FACHB-805)</name>
    <name type="common">Anacystis nidulans R2</name>
    <dbReference type="NCBI Taxonomy" id="1140"/>
    <lineage>
        <taxon>Bacteria</taxon>
        <taxon>Bacillati</taxon>
        <taxon>Cyanobacteriota</taxon>
        <taxon>Cyanophyceae</taxon>
        <taxon>Synechococcales</taxon>
        <taxon>Synechococcaceae</taxon>
        <taxon>Synechococcus</taxon>
    </lineage>
</organism>
<gene>
    <name evidence="1 2" type="primary">psbA2</name>
    <name type="synonym">psbA-II</name>
    <name type="ordered locus">Synpcc7942_1389</name>
</gene>
<gene>
    <name evidence="1 2" type="primary">psbA3</name>
    <name type="synonym">psbA-III</name>
    <name type="ordered locus">Synpcc7942_0893</name>
</gene>
<comment type="function">
    <text evidence="1">Photosystem II (PSII) is a light-driven water:plastoquinone oxidoreductase that uses light energy to abstract electrons from H(2)O, generating O(2) and a proton gradient subsequently used for ATP formation. It consists of a core antenna complex that captures photons, and an electron transfer chain that converts photonic excitation into a charge separation. The D1/D2 (PsbA/PsbD) reaction center heterodimer binds P680, the primary electron donor of PSII as well as several subsequent electron acceptors.</text>
</comment>
<comment type="catalytic activity">
    <reaction evidence="1">
        <text>2 a plastoquinone + 4 hnu + 2 H2O = 2 a plastoquinol + O2</text>
        <dbReference type="Rhea" id="RHEA:36359"/>
        <dbReference type="Rhea" id="RHEA-COMP:9561"/>
        <dbReference type="Rhea" id="RHEA-COMP:9562"/>
        <dbReference type="ChEBI" id="CHEBI:15377"/>
        <dbReference type="ChEBI" id="CHEBI:15379"/>
        <dbReference type="ChEBI" id="CHEBI:17757"/>
        <dbReference type="ChEBI" id="CHEBI:30212"/>
        <dbReference type="ChEBI" id="CHEBI:62192"/>
        <dbReference type="EC" id="1.10.3.9"/>
    </reaction>
</comment>
<comment type="cofactor">
    <text evidence="1">The D1/D2 heterodimer binds P680, chlorophylls that are the primary electron donor of PSII, and subsequent electron acceptors. It shares a non-heme iron and each subunit binds pheophytin, quinone, additional chlorophylls, carotenoids and lipids. D1 provides most of the ligands for the Mn4-Ca-O5 cluster of the oxygen-evolving complex (OEC). There is also a Cl(-1) ion associated with D1 and D2, which is required for oxygen evolution. The PSII complex binds additional chlorophylls, carotenoids and specific lipids.</text>
</comment>
<comment type="subunit">
    <text evidence="1">PSII is composed of 1 copy each of membrane proteins PsbA, PsbB, PsbC, PsbD, PsbE, PsbF, PsbH, PsbI, PsbJ, PsbK, PsbL, PsbM, PsbT, PsbX, PsbY, PsbZ, Psb30/Ycf12, peripheral proteins PsbO, CyanoQ (PsbQ), PsbU, PsbV and a large number of cofactors. It forms dimeric complexes.</text>
</comment>
<comment type="subcellular location">
    <subcellularLocation>
        <location evidence="1">Cellular thylakoid membrane</location>
        <topology evidence="1">Multi-pass membrane protein</topology>
    </subcellularLocation>
</comment>
<comment type="PTM">
    <text evidence="1">Tyr-161 forms a radical intermediate that is referred to as redox-active TyrZ, YZ or Y-Z.</text>
</comment>
<comment type="PTM">
    <text evidence="1">C-terminally processed by CtpA; processing is essential to allow assembly of the oxygen-evolving complex and thus photosynthetic growth.</text>
</comment>
<comment type="miscellaneous">
    <text evidence="1">Cyanobacteria usually contain more than 2 copies of the psbA gene.</text>
</comment>
<comment type="miscellaneous">
    <text evidence="1">2 of the reaction center chlorophylls (ChlD1 and ChlD2) are entirely coordinated by water.</text>
</comment>
<comment type="miscellaneous">
    <text evidence="1">Herbicides such as atrazine, BNT, diuron or ioxynil bind in the Q(B) binding site and block subsequent electron transfer.</text>
</comment>
<comment type="similarity">
    <text evidence="1">Belongs to the reaction center PufL/M/PsbA/D family.</text>
</comment>
<accession>P04997</accession>
<accession>Q31NF0</accession>
<name>PSBA2_SYNE7</name>